<protein>
    <recommendedName>
        <fullName evidence="1">N-acetyl-gamma-glutamyl-phosphate reductase</fullName>
        <shortName evidence="1">AGPR</shortName>
        <ecNumber evidence="1">1.2.1.38</ecNumber>
    </recommendedName>
    <alternativeName>
        <fullName evidence="1">N-acetyl-glutamate semialdehyde dehydrogenase</fullName>
        <shortName evidence="1">NAGSA dehydrogenase</shortName>
    </alternativeName>
</protein>
<comment type="function">
    <text evidence="1">Catalyzes the NADPH-dependent reduction of N-acetyl-5-glutamyl phosphate to yield N-acetyl-L-glutamate 5-semialdehyde.</text>
</comment>
<comment type="catalytic activity">
    <reaction evidence="1">
        <text>N-acetyl-L-glutamate 5-semialdehyde + phosphate + NADP(+) = N-acetyl-L-glutamyl 5-phosphate + NADPH + H(+)</text>
        <dbReference type="Rhea" id="RHEA:21588"/>
        <dbReference type="ChEBI" id="CHEBI:15378"/>
        <dbReference type="ChEBI" id="CHEBI:29123"/>
        <dbReference type="ChEBI" id="CHEBI:43474"/>
        <dbReference type="ChEBI" id="CHEBI:57783"/>
        <dbReference type="ChEBI" id="CHEBI:57936"/>
        <dbReference type="ChEBI" id="CHEBI:58349"/>
        <dbReference type="EC" id="1.2.1.38"/>
    </reaction>
</comment>
<comment type="pathway">
    <text evidence="1">Amino-acid biosynthesis; L-arginine biosynthesis; N(2)-acetyl-L-ornithine from L-glutamate: step 3/4.</text>
</comment>
<comment type="subcellular location">
    <subcellularLocation>
        <location evidence="1">Cytoplasm</location>
    </subcellularLocation>
</comment>
<comment type="similarity">
    <text evidence="1">Belongs to the NAGSA dehydrogenase family. Type 1 subfamily.</text>
</comment>
<feature type="chain" id="PRO_1000118052" description="N-acetyl-gamma-glutamyl-phosphate reductase">
    <location>
        <begin position="1"/>
        <end position="345"/>
    </location>
</feature>
<feature type="active site" evidence="1">
    <location>
        <position position="149"/>
    </location>
</feature>
<keyword id="KW-0028">Amino-acid biosynthesis</keyword>
<keyword id="KW-0055">Arginine biosynthesis</keyword>
<keyword id="KW-0963">Cytoplasm</keyword>
<keyword id="KW-0521">NADP</keyword>
<keyword id="KW-0560">Oxidoreductase</keyword>
<dbReference type="EC" id="1.2.1.38" evidence="1"/>
<dbReference type="EMBL" id="CP001176">
    <property type="protein sequence ID" value="ACK59227.1"/>
    <property type="molecule type" value="Genomic_DNA"/>
</dbReference>
<dbReference type="RefSeq" id="WP_000861244.1">
    <property type="nucleotide sequence ID" value="NC_011725.1"/>
</dbReference>
<dbReference type="SMR" id="B7HB04"/>
<dbReference type="KEGG" id="bcb:BCB4264_A4242"/>
<dbReference type="HOGENOM" id="CLU_006384_0_1_9"/>
<dbReference type="UniPathway" id="UPA00068">
    <property type="reaction ID" value="UER00108"/>
</dbReference>
<dbReference type="Proteomes" id="UP000007096">
    <property type="component" value="Chromosome"/>
</dbReference>
<dbReference type="GO" id="GO:0005737">
    <property type="term" value="C:cytoplasm"/>
    <property type="evidence" value="ECO:0007669"/>
    <property type="project" value="UniProtKB-SubCell"/>
</dbReference>
<dbReference type="GO" id="GO:0003942">
    <property type="term" value="F:N-acetyl-gamma-glutamyl-phosphate reductase activity"/>
    <property type="evidence" value="ECO:0007669"/>
    <property type="project" value="UniProtKB-UniRule"/>
</dbReference>
<dbReference type="GO" id="GO:0051287">
    <property type="term" value="F:NAD binding"/>
    <property type="evidence" value="ECO:0007669"/>
    <property type="project" value="InterPro"/>
</dbReference>
<dbReference type="GO" id="GO:0070401">
    <property type="term" value="F:NADP+ binding"/>
    <property type="evidence" value="ECO:0007669"/>
    <property type="project" value="InterPro"/>
</dbReference>
<dbReference type="GO" id="GO:0006526">
    <property type="term" value="P:L-arginine biosynthetic process"/>
    <property type="evidence" value="ECO:0007669"/>
    <property type="project" value="UniProtKB-UniRule"/>
</dbReference>
<dbReference type="CDD" id="cd23934">
    <property type="entry name" value="AGPR_1_C"/>
    <property type="match status" value="1"/>
</dbReference>
<dbReference type="CDD" id="cd17895">
    <property type="entry name" value="AGPR_1_N"/>
    <property type="match status" value="1"/>
</dbReference>
<dbReference type="FunFam" id="3.30.360.10:FF:000014">
    <property type="entry name" value="N-acetyl-gamma-glutamyl-phosphate reductase"/>
    <property type="match status" value="1"/>
</dbReference>
<dbReference type="Gene3D" id="3.30.360.10">
    <property type="entry name" value="Dihydrodipicolinate Reductase, domain 2"/>
    <property type="match status" value="1"/>
</dbReference>
<dbReference type="Gene3D" id="3.40.50.720">
    <property type="entry name" value="NAD(P)-binding Rossmann-like Domain"/>
    <property type="match status" value="1"/>
</dbReference>
<dbReference type="HAMAP" id="MF_00150">
    <property type="entry name" value="ArgC_type1"/>
    <property type="match status" value="1"/>
</dbReference>
<dbReference type="InterPro" id="IPR023013">
    <property type="entry name" value="AGPR_AS"/>
</dbReference>
<dbReference type="InterPro" id="IPR000706">
    <property type="entry name" value="AGPR_type-1"/>
</dbReference>
<dbReference type="InterPro" id="IPR036291">
    <property type="entry name" value="NAD(P)-bd_dom_sf"/>
</dbReference>
<dbReference type="InterPro" id="IPR050085">
    <property type="entry name" value="NAGSA_dehydrogenase"/>
</dbReference>
<dbReference type="InterPro" id="IPR000534">
    <property type="entry name" value="Semialdehyde_DH_NAD-bd"/>
</dbReference>
<dbReference type="NCBIfam" id="TIGR01850">
    <property type="entry name" value="argC"/>
    <property type="match status" value="1"/>
</dbReference>
<dbReference type="PANTHER" id="PTHR32338:SF10">
    <property type="entry name" value="N-ACETYL-GAMMA-GLUTAMYL-PHOSPHATE REDUCTASE, CHLOROPLASTIC-RELATED"/>
    <property type="match status" value="1"/>
</dbReference>
<dbReference type="PANTHER" id="PTHR32338">
    <property type="entry name" value="N-ACETYL-GAMMA-GLUTAMYL-PHOSPHATE REDUCTASE, CHLOROPLASTIC-RELATED-RELATED"/>
    <property type="match status" value="1"/>
</dbReference>
<dbReference type="Pfam" id="PF01118">
    <property type="entry name" value="Semialdhyde_dh"/>
    <property type="match status" value="1"/>
</dbReference>
<dbReference type="Pfam" id="PF22698">
    <property type="entry name" value="Semialdhyde_dhC_1"/>
    <property type="match status" value="1"/>
</dbReference>
<dbReference type="SMART" id="SM00859">
    <property type="entry name" value="Semialdhyde_dh"/>
    <property type="match status" value="1"/>
</dbReference>
<dbReference type="SUPFAM" id="SSF55347">
    <property type="entry name" value="Glyceraldehyde-3-phosphate dehydrogenase-like, C-terminal domain"/>
    <property type="match status" value="1"/>
</dbReference>
<dbReference type="SUPFAM" id="SSF51735">
    <property type="entry name" value="NAD(P)-binding Rossmann-fold domains"/>
    <property type="match status" value="1"/>
</dbReference>
<dbReference type="PROSITE" id="PS01224">
    <property type="entry name" value="ARGC"/>
    <property type="match status" value="1"/>
</dbReference>
<gene>
    <name evidence="1" type="primary">argC</name>
    <name type="ordered locus">BCB4264_A4242</name>
</gene>
<evidence type="ECO:0000255" key="1">
    <source>
        <dbReference type="HAMAP-Rule" id="MF_00150"/>
    </source>
</evidence>
<reference key="1">
    <citation type="submission" date="2008-10" db="EMBL/GenBank/DDBJ databases">
        <title>Genome sequence of Bacillus cereus B4264.</title>
        <authorList>
            <person name="Dodson R.J."/>
            <person name="Durkin A.S."/>
            <person name="Rosovitz M.J."/>
            <person name="Rasko D.A."/>
            <person name="Hoffmaster A."/>
            <person name="Ravel J."/>
            <person name="Sutton G."/>
        </authorList>
    </citation>
    <scope>NUCLEOTIDE SEQUENCE [LARGE SCALE GENOMIC DNA]</scope>
    <source>
        <strain>B4264</strain>
    </source>
</reference>
<organism>
    <name type="scientific">Bacillus cereus (strain B4264)</name>
    <dbReference type="NCBI Taxonomy" id="405532"/>
    <lineage>
        <taxon>Bacteria</taxon>
        <taxon>Bacillati</taxon>
        <taxon>Bacillota</taxon>
        <taxon>Bacilli</taxon>
        <taxon>Bacillales</taxon>
        <taxon>Bacillaceae</taxon>
        <taxon>Bacillus</taxon>
        <taxon>Bacillus cereus group</taxon>
    </lineage>
</organism>
<sequence length="345" mass="38512">MKVAIIGATGYGGIELIRLLEQHPYFSIASLHSFSQVGECITNVYPHLRNVLFHTLQEIDVKTIGKEAEIVFLATPAGVSAELTPKLVAEGLKVIDLSGDFRMIDPSSYELWYKRPAAKEEILRKAVYGLSEWKRTEIQKANLIANPGCFATATLLAIAPLIRSGMIEEDSIIIDAKSGVSGAGKTPTTMTHFPELYDNLHIYKVNQHQHVPEIEQMLTEWNSESQPITFSTHLIPISRGIMITLYAKVKQKMEIKQLQKLYEETYEQSPFIRICTQGKFPSPKEVRGSNYCDIGIAYDERTERVTVVSVIDNMMKGAAGQAIQNANIIAGLEETTGLQHMPLYL</sequence>
<name>ARGC_BACC4</name>
<accession>B7HB04</accession>
<proteinExistence type="inferred from homology"/>